<sequence length="290" mass="32809">MSNSYLAFPKFDPVIFSIGPVSLHWYGLMYLVGFVFAMWLAVRRANKPGSGWTKEEVENLLYAGFLGVFIGGRVGYVLFYNLPMFLDNPLYLFKVWDGGMSFHGGLIGVICVMLWFARRTKRNFFQVADFIAPLIPFGLGAGRLGNFINAELWGRVTTDTPWAMLFPTSRNTDIAIVAADPAKWQAIFNQYGVLPRHPSQLYEMILEGVVLFIILNVFIRKPRPMGSVSGLFLIGYGTFRIIVECFRQPDEQLGLFEGMISMGQILSVPMILAGIIMMIWAYRRPTQKLS</sequence>
<gene>
    <name evidence="1" type="primary">lgt</name>
    <name type="ordered locus">YpsIP31758_0983</name>
</gene>
<dbReference type="EC" id="2.5.1.145" evidence="1"/>
<dbReference type="EMBL" id="CP000720">
    <property type="protein sequence ID" value="ABS47673.1"/>
    <property type="molecule type" value="Genomic_DNA"/>
</dbReference>
<dbReference type="RefSeq" id="WP_002211383.1">
    <property type="nucleotide sequence ID" value="NC_009708.1"/>
</dbReference>
<dbReference type="SMR" id="A7FFD9"/>
<dbReference type="GeneID" id="57973850"/>
<dbReference type="KEGG" id="ypi:YpsIP31758_0983"/>
<dbReference type="HOGENOM" id="CLU_013386_1_0_6"/>
<dbReference type="UniPathway" id="UPA00664"/>
<dbReference type="Proteomes" id="UP000002412">
    <property type="component" value="Chromosome"/>
</dbReference>
<dbReference type="GO" id="GO:0005886">
    <property type="term" value="C:plasma membrane"/>
    <property type="evidence" value="ECO:0007669"/>
    <property type="project" value="UniProtKB-SubCell"/>
</dbReference>
<dbReference type="GO" id="GO:0008961">
    <property type="term" value="F:phosphatidylglycerol-prolipoprotein diacylglyceryl transferase activity"/>
    <property type="evidence" value="ECO:0007669"/>
    <property type="project" value="UniProtKB-UniRule"/>
</dbReference>
<dbReference type="GO" id="GO:0042158">
    <property type="term" value="P:lipoprotein biosynthetic process"/>
    <property type="evidence" value="ECO:0007669"/>
    <property type="project" value="UniProtKB-UniRule"/>
</dbReference>
<dbReference type="HAMAP" id="MF_01147">
    <property type="entry name" value="Lgt"/>
    <property type="match status" value="1"/>
</dbReference>
<dbReference type="InterPro" id="IPR001640">
    <property type="entry name" value="Lgt"/>
</dbReference>
<dbReference type="NCBIfam" id="TIGR00544">
    <property type="entry name" value="lgt"/>
    <property type="match status" value="1"/>
</dbReference>
<dbReference type="PANTHER" id="PTHR30589:SF0">
    <property type="entry name" value="PHOSPHATIDYLGLYCEROL--PROLIPOPROTEIN DIACYLGLYCERYL TRANSFERASE"/>
    <property type="match status" value="1"/>
</dbReference>
<dbReference type="PANTHER" id="PTHR30589">
    <property type="entry name" value="PROLIPOPROTEIN DIACYLGLYCERYL TRANSFERASE"/>
    <property type="match status" value="1"/>
</dbReference>
<dbReference type="Pfam" id="PF01790">
    <property type="entry name" value="LGT"/>
    <property type="match status" value="1"/>
</dbReference>
<dbReference type="PROSITE" id="PS01311">
    <property type="entry name" value="LGT"/>
    <property type="match status" value="1"/>
</dbReference>
<reference key="1">
    <citation type="journal article" date="2007" name="PLoS Genet.">
        <title>The complete genome sequence of Yersinia pseudotuberculosis IP31758, the causative agent of Far East scarlet-like fever.</title>
        <authorList>
            <person name="Eppinger M."/>
            <person name="Rosovitz M.J."/>
            <person name="Fricke W.F."/>
            <person name="Rasko D.A."/>
            <person name="Kokorina G."/>
            <person name="Fayolle C."/>
            <person name="Lindler L.E."/>
            <person name="Carniel E."/>
            <person name="Ravel J."/>
        </authorList>
    </citation>
    <scope>NUCLEOTIDE SEQUENCE [LARGE SCALE GENOMIC DNA]</scope>
    <source>
        <strain>IP 31758</strain>
    </source>
</reference>
<keyword id="KW-0997">Cell inner membrane</keyword>
<keyword id="KW-1003">Cell membrane</keyword>
<keyword id="KW-0472">Membrane</keyword>
<keyword id="KW-0808">Transferase</keyword>
<keyword id="KW-0812">Transmembrane</keyword>
<keyword id="KW-1133">Transmembrane helix</keyword>
<comment type="function">
    <text evidence="1">Catalyzes the transfer of the diacylglyceryl group from phosphatidylglycerol to the sulfhydryl group of the N-terminal cysteine of a prolipoprotein, the first step in the formation of mature lipoproteins.</text>
</comment>
<comment type="catalytic activity">
    <reaction evidence="1">
        <text>L-cysteinyl-[prolipoprotein] + a 1,2-diacyl-sn-glycero-3-phospho-(1'-sn-glycerol) = an S-1,2-diacyl-sn-glyceryl-L-cysteinyl-[prolipoprotein] + sn-glycerol 1-phosphate + H(+)</text>
        <dbReference type="Rhea" id="RHEA:56712"/>
        <dbReference type="Rhea" id="RHEA-COMP:14679"/>
        <dbReference type="Rhea" id="RHEA-COMP:14680"/>
        <dbReference type="ChEBI" id="CHEBI:15378"/>
        <dbReference type="ChEBI" id="CHEBI:29950"/>
        <dbReference type="ChEBI" id="CHEBI:57685"/>
        <dbReference type="ChEBI" id="CHEBI:64716"/>
        <dbReference type="ChEBI" id="CHEBI:140658"/>
        <dbReference type="EC" id="2.5.1.145"/>
    </reaction>
</comment>
<comment type="pathway">
    <text evidence="1">Protein modification; lipoprotein biosynthesis (diacylglyceryl transfer).</text>
</comment>
<comment type="subcellular location">
    <subcellularLocation>
        <location evidence="1">Cell inner membrane</location>
        <topology evidence="1">Multi-pass membrane protein</topology>
    </subcellularLocation>
</comment>
<comment type="similarity">
    <text evidence="1">Belongs to the Lgt family.</text>
</comment>
<protein>
    <recommendedName>
        <fullName evidence="1">Phosphatidylglycerol--prolipoprotein diacylglyceryl transferase</fullName>
        <ecNumber evidence="1">2.5.1.145</ecNumber>
    </recommendedName>
</protein>
<proteinExistence type="inferred from homology"/>
<name>LGT_YERP3</name>
<accession>A7FFD9</accession>
<organism>
    <name type="scientific">Yersinia pseudotuberculosis serotype O:1b (strain IP 31758)</name>
    <dbReference type="NCBI Taxonomy" id="349747"/>
    <lineage>
        <taxon>Bacteria</taxon>
        <taxon>Pseudomonadati</taxon>
        <taxon>Pseudomonadota</taxon>
        <taxon>Gammaproteobacteria</taxon>
        <taxon>Enterobacterales</taxon>
        <taxon>Yersiniaceae</taxon>
        <taxon>Yersinia</taxon>
    </lineage>
</organism>
<evidence type="ECO:0000255" key="1">
    <source>
        <dbReference type="HAMAP-Rule" id="MF_01147"/>
    </source>
</evidence>
<feature type="chain" id="PRO_1000065486" description="Phosphatidylglycerol--prolipoprotein diacylglyceryl transferase">
    <location>
        <begin position="1"/>
        <end position="290"/>
    </location>
</feature>
<feature type="transmembrane region" description="Helical" evidence="1">
    <location>
        <begin position="21"/>
        <end position="41"/>
    </location>
</feature>
<feature type="transmembrane region" description="Helical" evidence="1">
    <location>
        <begin position="60"/>
        <end position="80"/>
    </location>
</feature>
<feature type="transmembrane region" description="Helical" evidence="1">
    <location>
        <begin position="96"/>
        <end position="116"/>
    </location>
</feature>
<feature type="transmembrane region" description="Helical" evidence="1">
    <location>
        <begin position="124"/>
        <end position="144"/>
    </location>
</feature>
<feature type="transmembrane region" description="Helical" evidence="1">
    <location>
        <begin position="199"/>
        <end position="219"/>
    </location>
</feature>
<feature type="transmembrane region" description="Helical" evidence="1">
    <location>
        <begin position="226"/>
        <end position="246"/>
    </location>
</feature>
<feature type="transmembrane region" description="Helical" evidence="1">
    <location>
        <begin position="260"/>
        <end position="280"/>
    </location>
</feature>
<feature type="binding site" evidence="1">
    <location>
        <position position="143"/>
    </location>
    <ligand>
        <name>a 1,2-diacyl-sn-glycero-3-phospho-(1'-sn-glycerol)</name>
        <dbReference type="ChEBI" id="CHEBI:64716"/>
    </ligand>
</feature>